<proteinExistence type="inferred from homology"/>
<reference key="1">
    <citation type="journal article" date="2004" name="Proc. Natl. Acad. Sci. U.S.A.">
        <title>Genomic analysis of Bacteroides fragilis reveals extensive DNA inversions regulating cell surface adaptation.</title>
        <authorList>
            <person name="Kuwahara T."/>
            <person name="Yamashita A."/>
            <person name="Hirakawa H."/>
            <person name="Nakayama H."/>
            <person name="Toh H."/>
            <person name="Okada N."/>
            <person name="Kuhara S."/>
            <person name="Hattori M."/>
            <person name="Hayashi T."/>
            <person name="Ohnishi Y."/>
        </authorList>
    </citation>
    <scope>NUCLEOTIDE SEQUENCE [LARGE SCALE GENOMIC DNA]</scope>
    <source>
        <strain>YCH46</strain>
    </source>
</reference>
<accession>Q64XW8</accession>
<name>LPXD_BACFR</name>
<sequence length="346" mass="37123">MEFSAKQIAAFIQGEIIGDENATVHTFAKIEEGIPGAISFLSNPKYTPYIYETKASIVLVNKDFTPEQEVKATLIKVDNAYESLAKLLNLYEMSKPKRTGIDERAYVAETAKIGKDVYIAPFACIGDHAEIGDNTVIHPHATVGGGAKIGSNCILYANSTVYHDCRVGNNCILHAGCVIGADGFGFAPTPQGYEKIPQIGIVILEDNVEVGANTCIDRATMGATVIHSGVKLDNLVQIAHNDEIGSHTVMAAQVGIAGSTKVGEWCMFGGQVGIAGHLKIGNQVNLGAQSGVPGNIKSGSQLIGTPPMELKQFFKASIVQKSLPEMQIELRNLRKEIEELKQQLNK</sequence>
<feature type="chain" id="PRO_0000059644" description="UDP-3-O-acylglucosamine N-acyltransferase">
    <location>
        <begin position="1"/>
        <end position="346"/>
    </location>
</feature>
<feature type="active site" description="Proton acceptor" evidence="1">
    <location>
        <position position="240"/>
    </location>
</feature>
<protein>
    <recommendedName>
        <fullName evidence="1">UDP-3-O-acylglucosamine N-acyltransferase</fullName>
        <ecNumber evidence="1">2.3.1.191</ecNumber>
    </recommendedName>
</protein>
<keyword id="KW-0012">Acyltransferase</keyword>
<keyword id="KW-0441">Lipid A biosynthesis</keyword>
<keyword id="KW-0444">Lipid biosynthesis</keyword>
<keyword id="KW-0443">Lipid metabolism</keyword>
<keyword id="KW-0677">Repeat</keyword>
<keyword id="KW-0808">Transferase</keyword>
<gene>
    <name evidence="1" type="primary">lpxD</name>
    <name type="ordered locus">BF0907</name>
</gene>
<organism>
    <name type="scientific">Bacteroides fragilis (strain YCH46)</name>
    <dbReference type="NCBI Taxonomy" id="295405"/>
    <lineage>
        <taxon>Bacteria</taxon>
        <taxon>Pseudomonadati</taxon>
        <taxon>Bacteroidota</taxon>
        <taxon>Bacteroidia</taxon>
        <taxon>Bacteroidales</taxon>
        <taxon>Bacteroidaceae</taxon>
        <taxon>Bacteroides</taxon>
    </lineage>
</organism>
<evidence type="ECO:0000255" key="1">
    <source>
        <dbReference type="HAMAP-Rule" id="MF_00523"/>
    </source>
</evidence>
<comment type="function">
    <text evidence="1">Catalyzes the N-acylation of UDP-3-O-acylglucosamine using 3-hydroxyacyl-ACP as the acyl donor. Is involved in the biosynthesis of lipid A, a phosphorylated glycolipid that anchors the lipopolysaccharide to the outer membrane of the cell.</text>
</comment>
<comment type="catalytic activity">
    <reaction evidence="1">
        <text>a UDP-3-O-[(3R)-3-hydroxyacyl]-alpha-D-glucosamine + a (3R)-hydroxyacyl-[ACP] = a UDP-2-N,3-O-bis[(3R)-3-hydroxyacyl]-alpha-D-glucosamine + holo-[ACP] + H(+)</text>
        <dbReference type="Rhea" id="RHEA:53836"/>
        <dbReference type="Rhea" id="RHEA-COMP:9685"/>
        <dbReference type="Rhea" id="RHEA-COMP:9945"/>
        <dbReference type="ChEBI" id="CHEBI:15378"/>
        <dbReference type="ChEBI" id="CHEBI:64479"/>
        <dbReference type="ChEBI" id="CHEBI:78827"/>
        <dbReference type="ChEBI" id="CHEBI:137740"/>
        <dbReference type="ChEBI" id="CHEBI:137748"/>
        <dbReference type="EC" id="2.3.1.191"/>
    </reaction>
</comment>
<comment type="pathway">
    <text evidence="1">Bacterial outer membrane biogenesis; LPS lipid A biosynthesis.</text>
</comment>
<comment type="subunit">
    <text evidence="1">Homotrimer.</text>
</comment>
<comment type="similarity">
    <text evidence="1">Belongs to the transferase hexapeptide repeat family. LpxD subfamily.</text>
</comment>
<dbReference type="EC" id="2.3.1.191" evidence="1"/>
<dbReference type="EMBL" id="AP006841">
    <property type="protein sequence ID" value="BAD47658.1"/>
    <property type="molecule type" value="Genomic_DNA"/>
</dbReference>
<dbReference type="RefSeq" id="WP_011202193.1">
    <property type="nucleotide sequence ID" value="NC_006347.1"/>
</dbReference>
<dbReference type="RefSeq" id="YP_098192.1">
    <property type="nucleotide sequence ID" value="NC_006347.1"/>
</dbReference>
<dbReference type="SMR" id="Q64XW8"/>
<dbReference type="STRING" id="295405.BF0907"/>
<dbReference type="KEGG" id="bfr:BF0907"/>
<dbReference type="PATRIC" id="fig|295405.11.peg.910"/>
<dbReference type="HOGENOM" id="CLU_049865_0_0_10"/>
<dbReference type="OrthoDB" id="9784739at2"/>
<dbReference type="UniPathway" id="UPA00973"/>
<dbReference type="Proteomes" id="UP000002197">
    <property type="component" value="Chromosome"/>
</dbReference>
<dbReference type="GO" id="GO:0016020">
    <property type="term" value="C:membrane"/>
    <property type="evidence" value="ECO:0007669"/>
    <property type="project" value="GOC"/>
</dbReference>
<dbReference type="GO" id="GO:0016410">
    <property type="term" value="F:N-acyltransferase activity"/>
    <property type="evidence" value="ECO:0007669"/>
    <property type="project" value="InterPro"/>
</dbReference>
<dbReference type="GO" id="GO:0009245">
    <property type="term" value="P:lipid A biosynthetic process"/>
    <property type="evidence" value="ECO:0007669"/>
    <property type="project" value="UniProtKB-UniRule"/>
</dbReference>
<dbReference type="CDD" id="cd03352">
    <property type="entry name" value="LbH_LpxD"/>
    <property type="match status" value="1"/>
</dbReference>
<dbReference type="Gene3D" id="2.160.10.10">
    <property type="entry name" value="Hexapeptide repeat proteins"/>
    <property type="match status" value="1"/>
</dbReference>
<dbReference type="Gene3D" id="3.40.1390.10">
    <property type="entry name" value="MurE/MurF, N-terminal domain"/>
    <property type="match status" value="1"/>
</dbReference>
<dbReference type="HAMAP" id="MF_00523">
    <property type="entry name" value="LpxD"/>
    <property type="match status" value="1"/>
</dbReference>
<dbReference type="InterPro" id="IPR001451">
    <property type="entry name" value="Hexapep"/>
</dbReference>
<dbReference type="InterPro" id="IPR007691">
    <property type="entry name" value="LpxD"/>
</dbReference>
<dbReference type="InterPro" id="IPR011004">
    <property type="entry name" value="Trimer_LpxA-like_sf"/>
</dbReference>
<dbReference type="InterPro" id="IPR020573">
    <property type="entry name" value="UDP_GlcNAc_AcTrfase_non-rep"/>
</dbReference>
<dbReference type="NCBIfam" id="TIGR01853">
    <property type="entry name" value="lipid_A_lpxD"/>
    <property type="match status" value="1"/>
</dbReference>
<dbReference type="NCBIfam" id="NF002060">
    <property type="entry name" value="PRK00892.1"/>
    <property type="match status" value="1"/>
</dbReference>
<dbReference type="PANTHER" id="PTHR43378">
    <property type="entry name" value="UDP-3-O-ACYLGLUCOSAMINE N-ACYLTRANSFERASE"/>
    <property type="match status" value="1"/>
</dbReference>
<dbReference type="PANTHER" id="PTHR43378:SF2">
    <property type="entry name" value="UDP-3-O-ACYLGLUCOSAMINE N-ACYLTRANSFERASE 1, MITOCHONDRIAL-RELATED"/>
    <property type="match status" value="1"/>
</dbReference>
<dbReference type="Pfam" id="PF00132">
    <property type="entry name" value="Hexapep"/>
    <property type="match status" value="2"/>
</dbReference>
<dbReference type="Pfam" id="PF04613">
    <property type="entry name" value="LpxD"/>
    <property type="match status" value="1"/>
</dbReference>
<dbReference type="SUPFAM" id="SSF51161">
    <property type="entry name" value="Trimeric LpxA-like enzymes"/>
    <property type="match status" value="1"/>
</dbReference>